<dbReference type="EC" id="2.4.2.28" evidence="1"/>
<dbReference type="EMBL" id="CP017625">
    <property type="protein sequence ID" value="AOW28406.1"/>
    <property type="molecule type" value="Genomic_DNA"/>
</dbReference>
<dbReference type="RefSeq" id="XP_712739.1">
    <property type="nucleotide sequence ID" value="XM_707646.2"/>
</dbReference>
<dbReference type="SMR" id="Q59ST1"/>
<dbReference type="FunCoup" id="Q59ST1">
    <property type="interactions" value="433"/>
</dbReference>
<dbReference type="STRING" id="237561.Q59ST1"/>
<dbReference type="EnsemblFungi" id="C3_03790W_A-T">
    <property type="protein sequence ID" value="C3_03790W_A-T-p1"/>
    <property type="gene ID" value="C3_03790W_A"/>
</dbReference>
<dbReference type="GeneID" id="3645635"/>
<dbReference type="KEGG" id="cal:CAALFM_C303790WA"/>
<dbReference type="CGD" id="CAL0000179927">
    <property type="gene designation" value="MEU1"/>
</dbReference>
<dbReference type="VEuPathDB" id="FungiDB:C3_03790W_A"/>
<dbReference type="eggNOG" id="KOG3985">
    <property type="taxonomic scope" value="Eukaryota"/>
</dbReference>
<dbReference type="HOGENOM" id="CLU_054456_0_1_1"/>
<dbReference type="InParanoid" id="Q59ST1"/>
<dbReference type="OMA" id="ADPFCPE"/>
<dbReference type="OrthoDB" id="431409at2759"/>
<dbReference type="UniPathway" id="UPA00904">
    <property type="reaction ID" value="UER00873"/>
</dbReference>
<dbReference type="PRO" id="PR:Q59ST1"/>
<dbReference type="Proteomes" id="UP000000559">
    <property type="component" value="Chromosome 3"/>
</dbReference>
<dbReference type="GO" id="GO:0005829">
    <property type="term" value="C:cytosol"/>
    <property type="evidence" value="ECO:0000318"/>
    <property type="project" value="GO_Central"/>
</dbReference>
<dbReference type="GO" id="GO:0005634">
    <property type="term" value="C:nucleus"/>
    <property type="evidence" value="ECO:0007669"/>
    <property type="project" value="UniProtKB-SubCell"/>
</dbReference>
<dbReference type="GO" id="GO:0017061">
    <property type="term" value="F:S-methyl-5-thioadenosine phosphorylase activity"/>
    <property type="evidence" value="ECO:0000318"/>
    <property type="project" value="GO_Central"/>
</dbReference>
<dbReference type="GO" id="GO:0019509">
    <property type="term" value="P:L-methionine salvage from methylthioadenosine"/>
    <property type="evidence" value="ECO:0000318"/>
    <property type="project" value="GO_Central"/>
</dbReference>
<dbReference type="GO" id="GO:0006166">
    <property type="term" value="P:purine ribonucleoside salvage"/>
    <property type="evidence" value="ECO:0007669"/>
    <property type="project" value="UniProtKB-KW"/>
</dbReference>
<dbReference type="CDD" id="cd09010">
    <property type="entry name" value="MTAP_SsMTAPII_like_MTIP"/>
    <property type="match status" value="1"/>
</dbReference>
<dbReference type="FunFam" id="3.40.50.1580:FF:000008">
    <property type="entry name" value="S-methyl-5'-thioadenosine phosphorylase"/>
    <property type="match status" value="1"/>
</dbReference>
<dbReference type="Gene3D" id="3.40.50.1580">
    <property type="entry name" value="Nucleoside phosphorylase domain"/>
    <property type="match status" value="1"/>
</dbReference>
<dbReference type="HAMAP" id="MF_01963">
    <property type="entry name" value="MTAP"/>
    <property type="match status" value="1"/>
</dbReference>
<dbReference type="InterPro" id="IPR010044">
    <property type="entry name" value="MTAP"/>
</dbReference>
<dbReference type="InterPro" id="IPR000845">
    <property type="entry name" value="Nucleoside_phosphorylase_d"/>
</dbReference>
<dbReference type="InterPro" id="IPR035994">
    <property type="entry name" value="Nucleoside_phosphorylase_sf"/>
</dbReference>
<dbReference type="InterPro" id="IPR018099">
    <property type="entry name" value="Purine_phosphorylase-2_CS"/>
</dbReference>
<dbReference type="NCBIfam" id="TIGR01694">
    <property type="entry name" value="MTAP"/>
    <property type="match status" value="1"/>
</dbReference>
<dbReference type="PANTHER" id="PTHR42679">
    <property type="entry name" value="S-METHYL-5'-THIOADENOSINE PHOSPHORYLASE"/>
    <property type="match status" value="1"/>
</dbReference>
<dbReference type="PANTHER" id="PTHR42679:SF2">
    <property type="entry name" value="S-METHYL-5'-THIOADENOSINE PHOSPHORYLASE"/>
    <property type="match status" value="1"/>
</dbReference>
<dbReference type="Pfam" id="PF01048">
    <property type="entry name" value="PNP_UDP_1"/>
    <property type="match status" value="1"/>
</dbReference>
<dbReference type="SUPFAM" id="SSF53167">
    <property type="entry name" value="Purine and uridine phosphorylases"/>
    <property type="match status" value="1"/>
</dbReference>
<dbReference type="PROSITE" id="PS01240">
    <property type="entry name" value="PNP_MTAP_2"/>
    <property type="match status" value="1"/>
</dbReference>
<name>MTAP_CANAL</name>
<comment type="function">
    <text evidence="1">Catalyzes the reversible phosphorylation of S-methyl-5'-thioadenosine (MTA) to adenine and 5-methylthioribose-1-phosphate. Involved in the breakdown of MTA, a major by-product of polyamine biosynthesis. Responsible for the first step in the methionine salvage pathway after MTA has been generated from S-adenosylmethionine. Has broad substrate specificity with 6-aminopurine nucleosides as preferred substrates.</text>
</comment>
<comment type="catalytic activity">
    <reaction evidence="1">
        <text>S-methyl-5'-thioadenosine + phosphate = 5-(methylsulfanyl)-alpha-D-ribose 1-phosphate + adenine</text>
        <dbReference type="Rhea" id="RHEA:11852"/>
        <dbReference type="ChEBI" id="CHEBI:16708"/>
        <dbReference type="ChEBI" id="CHEBI:17509"/>
        <dbReference type="ChEBI" id="CHEBI:43474"/>
        <dbReference type="ChEBI" id="CHEBI:58533"/>
        <dbReference type="EC" id="2.4.2.28"/>
    </reaction>
</comment>
<comment type="pathway">
    <text evidence="1">Amino-acid biosynthesis; L-methionine biosynthesis via salvage pathway; S-methyl-5-thio-alpha-D-ribose 1-phosphate from S-methyl-5'-thioadenosine (phosphorylase route): step 1/1.</text>
</comment>
<comment type="subunit">
    <text evidence="1">Homotrimer.</text>
</comment>
<comment type="subcellular location">
    <subcellularLocation>
        <location evidence="1">Cytoplasm</location>
    </subcellularLocation>
    <subcellularLocation>
        <location evidence="1">Nucleus</location>
    </subcellularLocation>
</comment>
<comment type="similarity">
    <text evidence="1">Belongs to the PNP/MTAP phosphorylase family. MTAP subfamily.</text>
</comment>
<feature type="chain" id="PRO_0000415124" description="S-methyl-5'-thioadenosine phosphorylase">
    <location>
        <begin position="1"/>
        <end position="344"/>
    </location>
</feature>
<feature type="binding site" evidence="1">
    <location>
        <position position="45"/>
    </location>
    <ligand>
        <name>phosphate</name>
        <dbReference type="ChEBI" id="CHEBI:43474"/>
    </ligand>
</feature>
<feature type="binding site" evidence="1">
    <location>
        <begin position="88"/>
        <end position="89"/>
    </location>
    <ligand>
        <name>phosphate</name>
        <dbReference type="ChEBI" id="CHEBI:43474"/>
    </ligand>
</feature>
<feature type="binding site" evidence="1">
    <location>
        <begin position="121"/>
        <end position="122"/>
    </location>
    <ligand>
        <name>phosphate</name>
        <dbReference type="ChEBI" id="CHEBI:43474"/>
    </ligand>
</feature>
<feature type="binding site" evidence="1">
    <location>
        <position position="238"/>
    </location>
    <ligand>
        <name>substrate</name>
    </ligand>
</feature>
<feature type="binding site" evidence="1">
    <location>
        <position position="239"/>
    </location>
    <ligand>
        <name>phosphate</name>
        <dbReference type="ChEBI" id="CHEBI:43474"/>
    </ligand>
</feature>
<feature type="binding site" evidence="1">
    <location>
        <begin position="262"/>
        <end position="264"/>
    </location>
    <ligand>
        <name>substrate</name>
    </ligand>
</feature>
<feature type="site" description="Important for substrate specificity" evidence="1">
    <location>
        <position position="220"/>
    </location>
</feature>
<feature type="site" description="Important for substrate specificity" evidence="1">
    <location>
        <position position="275"/>
    </location>
</feature>
<protein>
    <recommendedName>
        <fullName evidence="1">S-methyl-5'-thioadenosine phosphorylase</fullName>
        <ecNumber evidence="1">2.4.2.28</ecNumber>
    </recommendedName>
    <alternativeName>
        <fullName evidence="1">5'-methylthioadenosine phosphorylase</fullName>
        <shortName evidence="1">MTA phosphorylase</shortName>
        <shortName evidence="1">MTAP</shortName>
        <shortName evidence="1">MTAPase</shortName>
    </alternativeName>
</protein>
<proteinExistence type="inferred from homology"/>
<evidence type="ECO:0000255" key="1">
    <source>
        <dbReference type="HAMAP-Rule" id="MF_03155"/>
    </source>
</evidence>
<keyword id="KW-0963">Cytoplasm</keyword>
<keyword id="KW-0328">Glycosyltransferase</keyword>
<keyword id="KW-0539">Nucleus</keyword>
<keyword id="KW-0660">Purine salvage</keyword>
<keyword id="KW-1185">Reference proteome</keyword>
<keyword id="KW-0808">Transferase</keyword>
<accession>Q59ST1</accession>
<accession>A0A1D8PJS6</accession>
<reference key="1">
    <citation type="journal article" date="2004" name="Proc. Natl. Acad. Sci. U.S.A.">
        <title>The diploid genome sequence of Candida albicans.</title>
        <authorList>
            <person name="Jones T."/>
            <person name="Federspiel N.A."/>
            <person name="Chibana H."/>
            <person name="Dungan J."/>
            <person name="Kalman S."/>
            <person name="Magee B.B."/>
            <person name="Newport G."/>
            <person name="Thorstenson Y.R."/>
            <person name="Agabian N."/>
            <person name="Magee P.T."/>
            <person name="Davis R.W."/>
            <person name="Scherer S."/>
        </authorList>
    </citation>
    <scope>NUCLEOTIDE SEQUENCE [LARGE SCALE GENOMIC DNA]</scope>
    <source>
        <strain>SC5314 / ATCC MYA-2876</strain>
    </source>
</reference>
<reference key="2">
    <citation type="journal article" date="2007" name="Genome Biol.">
        <title>Assembly of the Candida albicans genome into sixteen supercontigs aligned on the eight chromosomes.</title>
        <authorList>
            <person name="van het Hoog M."/>
            <person name="Rast T.J."/>
            <person name="Martchenko M."/>
            <person name="Grindle S."/>
            <person name="Dignard D."/>
            <person name="Hogues H."/>
            <person name="Cuomo C."/>
            <person name="Berriman M."/>
            <person name="Scherer S."/>
            <person name="Magee B.B."/>
            <person name="Whiteway M."/>
            <person name="Chibana H."/>
            <person name="Nantel A."/>
            <person name="Magee P.T."/>
        </authorList>
    </citation>
    <scope>GENOME REANNOTATION</scope>
    <source>
        <strain>SC5314 / ATCC MYA-2876</strain>
    </source>
</reference>
<reference key="3">
    <citation type="journal article" date="2013" name="Genome Biol.">
        <title>Assembly of a phased diploid Candida albicans genome facilitates allele-specific measurements and provides a simple model for repeat and indel structure.</title>
        <authorList>
            <person name="Muzzey D."/>
            <person name="Schwartz K."/>
            <person name="Weissman J.S."/>
            <person name="Sherlock G."/>
        </authorList>
    </citation>
    <scope>NUCLEOTIDE SEQUENCE [LARGE SCALE GENOMIC DNA]</scope>
    <scope>GENOME REANNOTATION</scope>
    <source>
        <strain>SC5314 / ATCC MYA-2876</strain>
    </source>
</reference>
<sequence length="344" mass="37618">MVKLVLKGNNLSKLIKMSVHREKIDLAKLPHHYDGPVTLAVIGGTGLYDLPNLHPVARLTISTPWGFPSGSITISKTDSGFPVAFLARHGAHHDLLPSDVPSRANIAALKRLGVKAIIAFSAVGSLQQEIKPRDFVLPTQIIDRTKGIRPSTFFEKGFVAHAMFGEPFDLKLNKLISDAIPSKGFLEGFDTDGTPVLHTKENTNNGEDLTIICMEGPQFSTRAESRLYRSWGGSVINMSVLPEAKLAREAEIAYQMICMSTDYDSWNESEEPVTVETVVGNLKANSANACKLAAKLIDEFAAKGGEIGKDLQGSMKYAVSTSPHGVKKELLEKMHFLFPGYWEV</sequence>
<gene>
    <name evidence="1" type="primary">MEU1</name>
    <name type="ordered locus">CAALFM_C303790WA</name>
    <name type="ORF">CaO19.14200</name>
    <name type="ORF">CaO19.6938</name>
</gene>
<organism>
    <name type="scientific">Candida albicans (strain SC5314 / ATCC MYA-2876)</name>
    <name type="common">Yeast</name>
    <dbReference type="NCBI Taxonomy" id="237561"/>
    <lineage>
        <taxon>Eukaryota</taxon>
        <taxon>Fungi</taxon>
        <taxon>Dikarya</taxon>
        <taxon>Ascomycota</taxon>
        <taxon>Saccharomycotina</taxon>
        <taxon>Pichiomycetes</taxon>
        <taxon>Debaryomycetaceae</taxon>
        <taxon>Candida/Lodderomyces clade</taxon>
        <taxon>Candida</taxon>
    </lineage>
</organism>